<name>MDTG_ECO57</name>
<accession>Q8X9I3</accession>
<accession>Q7AFA5</accession>
<reference key="1">
    <citation type="journal article" date="2001" name="Nature">
        <title>Genome sequence of enterohaemorrhagic Escherichia coli O157:H7.</title>
        <authorList>
            <person name="Perna N.T."/>
            <person name="Plunkett G. III"/>
            <person name="Burland V."/>
            <person name="Mau B."/>
            <person name="Glasner J.D."/>
            <person name="Rose D.J."/>
            <person name="Mayhew G.F."/>
            <person name="Evans P.S."/>
            <person name="Gregor J."/>
            <person name="Kirkpatrick H.A."/>
            <person name="Posfai G."/>
            <person name="Hackett J."/>
            <person name="Klink S."/>
            <person name="Boutin A."/>
            <person name="Shao Y."/>
            <person name="Miller L."/>
            <person name="Grotbeck E.J."/>
            <person name="Davis N.W."/>
            <person name="Lim A."/>
            <person name="Dimalanta E.T."/>
            <person name="Potamousis K."/>
            <person name="Apodaca J."/>
            <person name="Anantharaman T.S."/>
            <person name="Lin J."/>
            <person name="Yen G."/>
            <person name="Schwartz D.C."/>
            <person name="Welch R.A."/>
            <person name="Blattner F.R."/>
        </authorList>
    </citation>
    <scope>NUCLEOTIDE SEQUENCE [LARGE SCALE GENOMIC DNA]</scope>
    <source>
        <strain>O157:H7 / EDL933 / ATCC 700927 / EHEC</strain>
    </source>
</reference>
<reference key="2">
    <citation type="journal article" date="2001" name="DNA Res.">
        <title>Complete genome sequence of enterohemorrhagic Escherichia coli O157:H7 and genomic comparison with a laboratory strain K-12.</title>
        <authorList>
            <person name="Hayashi T."/>
            <person name="Makino K."/>
            <person name="Ohnishi M."/>
            <person name="Kurokawa K."/>
            <person name="Ishii K."/>
            <person name="Yokoyama K."/>
            <person name="Han C.-G."/>
            <person name="Ohtsubo E."/>
            <person name="Nakayama K."/>
            <person name="Murata T."/>
            <person name="Tanaka M."/>
            <person name="Tobe T."/>
            <person name="Iida T."/>
            <person name="Takami H."/>
            <person name="Honda T."/>
            <person name="Sasakawa C."/>
            <person name="Ogasawara N."/>
            <person name="Yasunaga T."/>
            <person name="Kuhara S."/>
            <person name="Shiba T."/>
            <person name="Hattori M."/>
            <person name="Shinagawa H."/>
        </authorList>
    </citation>
    <scope>NUCLEOTIDE SEQUENCE [LARGE SCALE GENOMIC DNA]</scope>
    <source>
        <strain>O157:H7 / Sakai / RIMD 0509952 / EHEC</strain>
    </source>
</reference>
<gene>
    <name evidence="1" type="primary">mdtG</name>
    <name type="ordered locus">Z1688</name>
    <name type="ordered locus">ECs1431</name>
</gene>
<keyword id="KW-0046">Antibiotic resistance</keyword>
<keyword id="KW-0997">Cell inner membrane</keyword>
<keyword id="KW-1003">Cell membrane</keyword>
<keyword id="KW-0472">Membrane</keyword>
<keyword id="KW-1185">Reference proteome</keyword>
<keyword id="KW-0812">Transmembrane</keyword>
<keyword id="KW-1133">Transmembrane helix</keyword>
<keyword id="KW-0813">Transport</keyword>
<proteinExistence type="inferred from homology"/>
<sequence length="408" mass="43867">MSPCENDTPINWKRNLIVAWLGCFLTGAAFSLVMPFLPLYVEQLGVTGHSALNMWSGIVFSITFLFSAIASPFWGGLADRKGRKLMLLRSALGMGIVMVLMGLAQNIWQFLILRALLGLLGGFVPNANALIATQVPRNKSGWALGTLSTGGVSGALLGPMAGGLLADSYGLRPVFFITASVLILCFFVTLFCIREKFQPVSKKEMLHMREVVTSLKNPKLVLSLFVTTLIIQVATGSIAPILTLYVRELAGNVSNVAFISGMIASVPGVAALLSAPRLGKLGDRIGPEKILITALIFSVLLLIPMSYVQTPLQLGILRFLLGAADGALLPAVQTLLVYNSSNQIAGRIFSYNQSFRDIGNVTGPLMGAAISANYGFRAVFLVTAGVVLFNAVYSWNSLRRRRIPQVSN</sequence>
<feature type="chain" id="PRO_0000173336" description="Multidrug resistance protein MdtG">
    <location>
        <begin position="1"/>
        <end position="408"/>
    </location>
</feature>
<feature type="transmembrane region" description="Helical" evidence="1">
    <location>
        <begin position="16"/>
        <end position="36"/>
    </location>
</feature>
<feature type="transmembrane region" description="Helical" evidence="1">
    <location>
        <begin position="58"/>
        <end position="78"/>
    </location>
</feature>
<feature type="transmembrane region" description="Helical" evidence="1">
    <location>
        <begin position="92"/>
        <end position="112"/>
    </location>
</feature>
<feature type="transmembrane region" description="Helical" evidence="1">
    <location>
        <begin position="115"/>
        <end position="135"/>
    </location>
</feature>
<feature type="transmembrane region" description="Helical" evidence="1">
    <location>
        <begin position="146"/>
        <end position="166"/>
    </location>
</feature>
<feature type="transmembrane region" description="Helical" evidence="1">
    <location>
        <begin position="173"/>
        <end position="193"/>
    </location>
</feature>
<feature type="transmembrane region" description="Helical" evidence="1">
    <location>
        <begin position="224"/>
        <end position="244"/>
    </location>
</feature>
<feature type="transmembrane region" description="Helical" evidence="1">
    <location>
        <begin position="256"/>
        <end position="276"/>
    </location>
</feature>
<feature type="transmembrane region" description="Helical" evidence="1">
    <location>
        <begin position="290"/>
        <end position="310"/>
    </location>
</feature>
<feature type="transmembrane region" description="Helical" evidence="1">
    <location>
        <begin position="319"/>
        <end position="339"/>
    </location>
</feature>
<feature type="transmembrane region" description="Helical" evidence="1">
    <location>
        <begin position="378"/>
        <end position="398"/>
    </location>
</feature>
<dbReference type="EMBL" id="AE005174">
    <property type="protein sequence ID" value="AAG55799.1"/>
    <property type="status" value="ALT_SEQ"/>
    <property type="molecule type" value="Genomic_DNA"/>
</dbReference>
<dbReference type="EMBL" id="BA000007">
    <property type="protein sequence ID" value="BAB34854.1"/>
    <property type="status" value="ALT_SEQ"/>
    <property type="molecule type" value="Genomic_DNA"/>
</dbReference>
<dbReference type="PIR" id="C85667">
    <property type="entry name" value="C85667"/>
</dbReference>
<dbReference type="PIR" id="G90807">
    <property type="entry name" value="G90807"/>
</dbReference>
<dbReference type="RefSeq" id="WP_000074172.1">
    <property type="nucleotide sequence ID" value="NZ_SWKA01000005.1"/>
</dbReference>
<dbReference type="SMR" id="Q8X9I3"/>
<dbReference type="STRING" id="155864.Z1688"/>
<dbReference type="GeneID" id="75203640"/>
<dbReference type="KEGG" id="ece:Z1688"/>
<dbReference type="eggNOG" id="COG2814">
    <property type="taxonomic scope" value="Bacteria"/>
</dbReference>
<dbReference type="HOGENOM" id="CLU_001265_57_3_6"/>
<dbReference type="OMA" id="GGHFGMR"/>
<dbReference type="Proteomes" id="UP000000558">
    <property type="component" value="Chromosome"/>
</dbReference>
<dbReference type="Proteomes" id="UP000002519">
    <property type="component" value="Chromosome"/>
</dbReference>
<dbReference type="GO" id="GO:0005886">
    <property type="term" value="C:plasma membrane"/>
    <property type="evidence" value="ECO:0007669"/>
    <property type="project" value="UniProtKB-SubCell"/>
</dbReference>
<dbReference type="GO" id="GO:0022857">
    <property type="term" value="F:transmembrane transporter activity"/>
    <property type="evidence" value="ECO:0007669"/>
    <property type="project" value="UniProtKB-UniRule"/>
</dbReference>
<dbReference type="GO" id="GO:0046677">
    <property type="term" value="P:response to antibiotic"/>
    <property type="evidence" value="ECO:0007669"/>
    <property type="project" value="UniProtKB-KW"/>
</dbReference>
<dbReference type="CDD" id="cd17391">
    <property type="entry name" value="MFS_MdtG_MDR_like"/>
    <property type="match status" value="1"/>
</dbReference>
<dbReference type="FunFam" id="1.20.1250.20:FF:000020">
    <property type="entry name" value="Multidrug resistance protein MdtG"/>
    <property type="match status" value="1"/>
</dbReference>
<dbReference type="FunFam" id="1.20.1250.20:FF:000022">
    <property type="entry name" value="Multidrug resistance protein MdtG"/>
    <property type="match status" value="1"/>
</dbReference>
<dbReference type="Gene3D" id="1.20.1250.20">
    <property type="entry name" value="MFS general substrate transporter like domains"/>
    <property type="match status" value="2"/>
</dbReference>
<dbReference type="HAMAP" id="MF_01528">
    <property type="entry name" value="MFS_MdtG"/>
    <property type="match status" value="1"/>
</dbReference>
<dbReference type="InterPro" id="IPR011701">
    <property type="entry name" value="MFS"/>
</dbReference>
<dbReference type="InterPro" id="IPR020846">
    <property type="entry name" value="MFS_dom"/>
</dbReference>
<dbReference type="InterPro" id="IPR050497">
    <property type="entry name" value="MFS_MdtG_subfamily"/>
</dbReference>
<dbReference type="InterPro" id="IPR036259">
    <property type="entry name" value="MFS_trans_sf"/>
</dbReference>
<dbReference type="InterPro" id="IPR023692">
    <property type="entry name" value="Mutidrug-R_MdtG"/>
</dbReference>
<dbReference type="InterPro" id="IPR001958">
    <property type="entry name" value="Tet-R_TetA/multi-R_MdtG-like"/>
</dbReference>
<dbReference type="NCBIfam" id="NF007372">
    <property type="entry name" value="PRK09874.1"/>
    <property type="match status" value="1"/>
</dbReference>
<dbReference type="PANTHER" id="PTHR43414">
    <property type="entry name" value="MULTIDRUG RESISTANCE PROTEIN MDTG"/>
    <property type="match status" value="1"/>
</dbReference>
<dbReference type="PANTHER" id="PTHR43414:SF6">
    <property type="entry name" value="MULTIDRUG RESISTANCE PROTEIN MDTG"/>
    <property type="match status" value="1"/>
</dbReference>
<dbReference type="Pfam" id="PF07690">
    <property type="entry name" value="MFS_1"/>
    <property type="match status" value="1"/>
</dbReference>
<dbReference type="PRINTS" id="PR01035">
    <property type="entry name" value="TCRTETA"/>
</dbReference>
<dbReference type="SUPFAM" id="SSF103473">
    <property type="entry name" value="MFS general substrate transporter"/>
    <property type="match status" value="1"/>
</dbReference>
<dbReference type="PROSITE" id="PS50850">
    <property type="entry name" value="MFS"/>
    <property type="match status" value="1"/>
</dbReference>
<comment type="function">
    <text evidence="1">Confers resistance to fosfomycin and deoxycholate.</text>
</comment>
<comment type="subcellular location">
    <subcellularLocation>
        <location evidence="1">Cell inner membrane</location>
        <topology evidence="1">Multi-pass membrane protein</topology>
    </subcellularLocation>
</comment>
<comment type="similarity">
    <text evidence="1">Belongs to the major facilitator superfamily. DHA1 family. MdtG (TC 2.A.1.2.20) subfamily.</text>
</comment>
<comment type="sequence caution" evidence="2">
    <conflict type="erroneous termination">
        <sequence resource="EMBL-CDS" id="AAG55799"/>
    </conflict>
    <text>Truncated C-terminus.</text>
</comment>
<comment type="sequence caution" evidence="2">
    <conflict type="erroneous termination">
        <sequence resource="EMBL-CDS" id="BAB34854"/>
    </conflict>
    <text>Truncated C-terminus.</text>
</comment>
<protein>
    <recommendedName>
        <fullName evidence="1">Multidrug resistance protein MdtG</fullName>
    </recommendedName>
</protein>
<organism>
    <name type="scientific">Escherichia coli O157:H7</name>
    <dbReference type="NCBI Taxonomy" id="83334"/>
    <lineage>
        <taxon>Bacteria</taxon>
        <taxon>Pseudomonadati</taxon>
        <taxon>Pseudomonadota</taxon>
        <taxon>Gammaproteobacteria</taxon>
        <taxon>Enterobacterales</taxon>
        <taxon>Enterobacteriaceae</taxon>
        <taxon>Escherichia</taxon>
    </lineage>
</organism>
<evidence type="ECO:0000255" key="1">
    <source>
        <dbReference type="HAMAP-Rule" id="MF_01528"/>
    </source>
</evidence>
<evidence type="ECO:0000305" key="2"/>